<proteinExistence type="inferred from homology"/>
<evidence type="ECO:0000255" key="1">
    <source>
        <dbReference type="HAMAP-Rule" id="MF_00091"/>
    </source>
</evidence>
<name>LUXS_PROMI</name>
<reference key="1">
    <citation type="submission" date="2001-07" db="EMBL/GenBank/DDBJ databases">
        <title>Proteus mirabilis LuxS quorum-sensing is not required for virulence or swarming behavior.</title>
        <authorList>
            <person name="Schneider R."/>
            <person name="Belas R."/>
        </authorList>
    </citation>
    <scope>NUCLEOTIDE SEQUENCE [GENOMIC DNA]</scope>
</reference>
<keyword id="KW-0071">Autoinducer synthesis</keyword>
<keyword id="KW-0408">Iron</keyword>
<keyword id="KW-0456">Lyase</keyword>
<keyword id="KW-0479">Metal-binding</keyword>
<keyword id="KW-0673">Quorum sensing</keyword>
<comment type="function">
    <text evidence="1">Involved in the synthesis of autoinducer 2 (AI-2) which is secreted by bacteria and is used to communicate both the cell density and the metabolic potential of the environment. The regulation of gene expression in response to changes in cell density is called quorum sensing. Catalyzes the transformation of S-ribosylhomocysteine (RHC) to homocysteine (HC) and 4,5-dihydroxy-2,3-pentadione (DPD).</text>
</comment>
<comment type="catalytic activity">
    <reaction evidence="1">
        <text>S-(5-deoxy-D-ribos-5-yl)-L-homocysteine = (S)-4,5-dihydroxypentane-2,3-dione + L-homocysteine</text>
        <dbReference type="Rhea" id="RHEA:17753"/>
        <dbReference type="ChEBI" id="CHEBI:29484"/>
        <dbReference type="ChEBI" id="CHEBI:58195"/>
        <dbReference type="ChEBI" id="CHEBI:58199"/>
        <dbReference type="EC" id="4.4.1.21"/>
    </reaction>
</comment>
<comment type="cofactor">
    <cofactor evidence="1">
        <name>Fe cation</name>
        <dbReference type="ChEBI" id="CHEBI:24875"/>
    </cofactor>
    <text evidence="1">Binds 1 Fe cation per subunit.</text>
</comment>
<comment type="subunit">
    <text evidence="1">Homodimer.</text>
</comment>
<comment type="similarity">
    <text evidence="1">Belongs to the LuxS family.</text>
</comment>
<feature type="chain" id="PRO_0000172246" description="S-ribosylhomocysteine lyase">
    <location>
        <begin position="1"/>
        <end position="171"/>
    </location>
</feature>
<feature type="binding site" evidence="1">
    <location>
        <position position="54"/>
    </location>
    <ligand>
        <name>Fe cation</name>
        <dbReference type="ChEBI" id="CHEBI:24875"/>
    </ligand>
</feature>
<feature type="binding site" evidence="1">
    <location>
        <position position="58"/>
    </location>
    <ligand>
        <name>Fe cation</name>
        <dbReference type="ChEBI" id="CHEBI:24875"/>
    </ligand>
</feature>
<feature type="binding site" evidence="1">
    <location>
        <position position="128"/>
    </location>
    <ligand>
        <name>Fe cation</name>
        <dbReference type="ChEBI" id="CHEBI:24875"/>
    </ligand>
</feature>
<dbReference type="EC" id="4.4.1.21" evidence="1"/>
<dbReference type="EMBL" id="AY044337">
    <property type="protein sequence ID" value="AAK85153.1"/>
    <property type="molecule type" value="Genomic_DNA"/>
</dbReference>
<dbReference type="RefSeq" id="WP_004244776.1">
    <property type="nucleotide sequence ID" value="NZ_WURR01000003.1"/>
</dbReference>
<dbReference type="SMR" id="Q93LC7"/>
<dbReference type="STRING" id="584.AOUC001_13940"/>
<dbReference type="GeneID" id="6801513"/>
<dbReference type="OMA" id="DVSPMGC"/>
<dbReference type="OrthoDB" id="9788129at2"/>
<dbReference type="GO" id="GO:0005506">
    <property type="term" value="F:iron ion binding"/>
    <property type="evidence" value="ECO:0007669"/>
    <property type="project" value="InterPro"/>
</dbReference>
<dbReference type="GO" id="GO:0043768">
    <property type="term" value="F:S-ribosylhomocysteine lyase activity"/>
    <property type="evidence" value="ECO:0007669"/>
    <property type="project" value="UniProtKB-UniRule"/>
</dbReference>
<dbReference type="GO" id="GO:0009372">
    <property type="term" value="P:quorum sensing"/>
    <property type="evidence" value="ECO:0007669"/>
    <property type="project" value="UniProtKB-UniRule"/>
</dbReference>
<dbReference type="FunFam" id="3.30.1360.80:FF:000001">
    <property type="entry name" value="S-ribosylhomocysteine lyase"/>
    <property type="match status" value="1"/>
</dbReference>
<dbReference type="Gene3D" id="3.30.1360.80">
    <property type="entry name" value="S-ribosylhomocysteinase (LuxS)"/>
    <property type="match status" value="1"/>
</dbReference>
<dbReference type="HAMAP" id="MF_00091">
    <property type="entry name" value="LuxS"/>
    <property type="match status" value="1"/>
</dbReference>
<dbReference type="InterPro" id="IPR037005">
    <property type="entry name" value="LuxS_sf"/>
</dbReference>
<dbReference type="InterPro" id="IPR011249">
    <property type="entry name" value="Metalloenz_LuxS/M16"/>
</dbReference>
<dbReference type="InterPro" id="IPR003815">
    <property type="entry name" value="S-ribosylhomocysteinase"/>
</dbReference>
<dbReference type="NCBIfam" id="NF002602">
    <property type="entry name" value="PRK02260.1-2"/>
    <property type="match status" value="1"/>
</dbReference>
<dbReference type="PANTHER" id="PTHR35799">
    <property type="entry name" value="S-RIBOSYLHOMOCYSTEINE LYASE"/>
    <property type="match status" value="1"/>
</dbReference>
<dbReference type="PANTHER" id="PTHR35799:SF1">
    <property type="entry name" value="S-RIBOSYLHOMOCYSTEINE LYASE"/>
    <property type="match status" value="1"/>
</dbReference>
<dbReference type="Pfam" id="PF02664">
    <property type="entry name" value="LuxS"/>
    <property type="match status" value="1"/>
</dbReference>
<dbReference type="PIRSF" id="PIRSF006160">
    <property type="entry name" value="AI2"/>
    <property type="match status" value="1"/>
</dbReference>
<dbReference type="PRINTS" id="PR01487">
    <property type="entry name" value="LUXSPROTEIN"/>
</dbReference>
<dbReference type="SUPFAM" id="SSF63411">
    <property type="entry name" value="LuxS/MPP-like metallohydrolase"/>
    <property type="match status" value="1"/>
</dbReference>
<gene>
    <name evidence="1" type="primary">luxS</name>
</gene>
<protein>
    <recommendedName>
        <fullName evidence="1">S-ribosylhomocysteine lyase</fullName>
        <ecNumber evidence="1">4.4.1.21</ecNumber>
    </recommendedName>
    <alternativeName>
        <fullName evidence="1">AI-2 synthesis protein</fullName>
    </alternativeName>
    <alternativeName>
        <fullName evidence="1">Autoinducer-2 production protein LuxS</fullName>
    </alternativeName>
</protein>
<sequence>MPLLDSFTVDHTRMSAPAVRVAKTMKTPSGDTITVFDLRFTVPNKKAMPEKGIHTLEHLFAGFMRNHLNGEGVEIIDISPMGCRTGFYMSLIGQPDEQRVANAWKAAMEDVLKVKDQNHIPELNVYQCGTYEMHSLAEAQDIARDILSHTIGINHNDELALPEDKLKELQI</sequence>
<organism>
    <name type="scientific">Proteus mirabilis</name>
    <dbReference type="NCBI Taxonomy" id="584"/>
    <lineage>
        <taxon>Bacteria</taxon>
        <taxon>Pseudomonadati</taxon>
        <taxon>Pseudomonadota</taxon>
        <taxon>Gammaproteobacteria</taxon>
        <taxon>Enterobacterales</taxon>
        <taxon>Morganellaceae</taxon>
        <taxon>Proteus</taxon>
    </lineage>
</organism>
<accession>Q93LC7</accession>